<protein>
    <recommendedName>
        <fullName evidence="5">tRNA N(3)-cytidine methyltransferase METTL2</fullName>
        <ecNumber evidence="1">2.1.1.-</ecNumber>
    </recommendedName>
    <alternativeName>
        <fullName>Methyltransferase-like protein 2</fullName>
    </alternativeName>
</protein>
<proteinExistence type="evidence at transcript level"/>
<sequence>MAAPSEAPERRRPFGRRFLTDPTRLFQHNAWDNVEWSEEQEATAKSKVQENSSQLLPQDKQEEYEVNAKRYWDDFYKIHENGFFKDRHWLFTEFPELAPNRNPSQNEDSLCEFSCKEVSKNEGLGSCENGHCTLENRAENQLNLLKSSPRFCTEELAPQKLKQSYEDYPGSSASYRILEVGCGAGNTVFPILQTNNDPGLFVYCCDFSTTAVDLVQSNVEYDSSRCFAFVHDLCNDQSPFPMPDESLDIVILIFVLSAILPEKMQCVINKLSRLLKPGGMILLRDYGRYDLAQLRFKKGQCLSANFYVRGDGTRVYFFTQDELDDLFTRAGLQKIQNLVDRRLQVNRGKQMTMYRVWIQCKYQKPAGPQL</sequence>
<dbReference type="EC" id="2.1.1.-" evidence="1"/>
<dbReference type="EMBL" id="AJ721086">
    <property type="protein sequence ID" value="CAG32745.1"/>
    <property type="molecule type" value="mRNA"/>
</dbReference>
<dbReference type="RefSeq" id="NP_001006329.1">
    <property type="nucleotide sequence ID" value="NM_001006329.1"/>
</dbReference>
<dbReference type="SMR" id="Q5ZHP8"/>
<dbReference type="FunCoup" id="Q5ZHP8">
    <property type="interactions" value="2393"/>
</dbReference>
<dbReference type="STRING" id="9031.ENSGALP00000055408"/>
<dbReference type="PaxDb" id="9031-ENSGALP00000000540"/>
<dbReference type="GeneID" id="419948"/>
<dbReference type="KEGG" id="gga:419948"/>
<dbReference type="CTD" id="55798"/>
<dbReference type="VEuPathDB" id="HostDB:geneid_419948"/>
<dbReference type="eggNOG" id="KOG2361">
    <property type="taxonomic scope" value="Eukaryota"/>
</dbReference>
<dbReference type="HOGENOM" id="CLU_029724_0_2_1"/>
<dbReference type="InParanoid" id="Q5ZHP8"/>
<dbReference type="OMA" id="PAKYWDI"/>
<dbReference type="OrthoDB" id="417697at2759"/>
<dbReference type="PhylomeDB" id="Q5ZHP8"/>
<dbReference type="PRO" id="PR:Q5ZHP8"/>
<dbReference type="Proteomes" id="UP000000539">
    <property type="component" value="Chromosome 27"/>
</dbReference>
<dbReference type="Bgee" id="ENSGALG00000000396">
    <property type="expression patterns" value="Expressed in testis and 14 other cell types or tissues"/>
</dbReference>
<dbReference type="GO" id="GO:0005737">
    <property type="term" value="C:cytoplasm"/>
    <property type="evidence" value="ECO:0000250"/>
    <property type="project" value="UniProtKB"/>
</dbReference>
<dbReference type="GO" id="GO:0016427">
    <property type="term" value="F:tRNA (cytidine) methyltransferase activity"/>
    <property type="evidence" value="ECO:0000250"/>
    <property type="project" value="UniProtKB"/>
</dbReference>
<dbReference type="GO" id="GO:0052735">
    <property type="term" value="F:tRNA (cytidine-3-)-methyltransferase activity"/>
    <property type="evidence" value="ECO:0000318"/>
    <property type="project" value="GO_Central"/>
</dbReference>
<dbReference type="GO" id="GO:0030488">
    <property type="term" value="P:tRNA methylation"/>
    <property type="evidence" value="ECO:0000250"/>
    <property type="project" value="UniProtKB"/>
</dbReference>
<dbReference type="CDD" id="cd02440">
    <property type="entry name" value="AdoMet_MTases"/>
    <property type="match status" value="1"/>
</dbReference>
<dbReference type="Gene3D" id="3.40.50.150">
    <property type="entry name" value="Vaccinia Virus protein VP39"/>
    <property type="match status" value="1"/>
</dbReference>
<dbReference type="InterPro" id="IPR013217">
    <property type="entry name" value="Methyltransf_12"/>
</dbReference>
<dbReference type="InterPro" id="IPR026113">
    <property type="entry name" value="METTL2/6/8-like"/>
</dbReference>
<dbReference type="InterPro" id="IPR029063">
    <property type="entry name" value="SAM-dependent_MTases_sf"/>
</dbReference>
<dbReference type="PANTHER" id="PTHR22809">
    <property type="entry name" value="METHYLTRANSFERASE-RELATED"/>
    <property type="match status" value="1"/>
</dbReference>
<dbReference type="PANTHER" id="PTHR22809:SF4">
    <property type="entry name" value="TRNA N(3)-METHYLCYTIDINE METHYLTRANSFERASE METTL2A-RELATED"/>
    <property type="match status" value="1"/>
</dbReference>
<dbReference type="Pfam" id="PF08242">
    <property type="entry name" value="Methyltransf_12"/>
    <property type="match status" value="1"/>
</dbReference>
<dbReference type="PIRSF" id="PIRSF037755">
    <property type="entry name" value="Mettl2_prd"/>
    <property type="match status" value="1"/>
</dbReference>
<dbReference type="SUPFAM" id="SSF53335">
    <property type="entry name" value="S-adenosyl-L-methionine-dependent methyltransferases"/>
    <property type="match status" value="1"/>
</dbReference>
<organism>
    <name type="scientific">Gallus gallus</name>
    <name type="common">Chicken</name>
    <dbReference type="NCBI Taxonomy" id="9031"/>
    <lineage>
        <taxon>Eukaryota</taxon>
        <taxon>Metazoa</taxon>
        <taxon>Chordata</taxon>
        <taxon>Craniata</taxon>
        <taxon>Vertebrata</taxon>
        <taxon>Euteleostomi</taxon>
        <taxon>Archelosauria</taxon>
        <taxon>Archosauria</taxon>
        <taxon>Dinosauria</taxon>
        <taxon>Saurischia</taxon>
        <taxon>Theropoda</taxon>
        <taxon>Coelurosauria</taxon>
        <taxon>Aves</taxon>
        <taxon>Neognathae</taxon>
        <taxon>Galloanserae</taxon>
        <taxon>Galliformes</taxon>
        <taxon>Phasianidae</taxon>
        <taxon>Phasianinae</taxon>
        <taxon>Gallus</taxon>
    </lineage>
</organism>
<gene>
    <name type="primary">METTL2</name>
    <name evidence="4" type="ORF">RCJMB04_34l11</name>
</gene>
<feature type="chain" id="PRO_0000328848" description="tRNA N(3)-cytidine methyltransferase METTL2">
    <location>
        <begin position="1"/>
        <end position="370"/>
    </location>
</feature>
<feature type="binding site" evidence="2">
    <location>
        <position position="72"/>
    </location>
    <ligand>
        <name>S-adenosyl-L-methionine</name>
        <dbReference type="ChEBI" id="CHEBI:59789"/>
    </ligand>
</feature>
<feature type="binding site" evidence="2">
    <location>
        <position position="76"/>
    </location>
    <ligand>
        <name>S-adenosyl-L-methionine</name>
        <dbReference type="ChEBI" id="CHEBI:59789"/>
    </ligand>
</feature>
<feature type="binding site" evidence="2">
    <location>
        <position position="181"/>
    </location>
    <ligand>
        <name>S-adenosyl-L-methionine</name>
        <dbReference type="ChEBI" id="CHEBI:59789"/>
    </ligand>
</feature>
<feature type="binding site" evidence="2">
    <location>
        <position position="206"/>
    </location>
    <ligand>
        <name>S-adenosyl-L-methionine</name>
        <dbReference type="ChEBI" id="CHEBI:59789"/>
    </ligand>
</feature>
<feature type="binding site" evidence="2">
    <location>
        <position position="232"/>
    </location>
    <ligand>
        <name>S-adenosyl-L-methionine</name>
        <dbReference type="ChEBI" id="CHEBI:59789"/>
    </ligand>
</feature>
<feature type="binding site" evidence="2">
    <location>
        <position position="233"/>
    </location>
    <ligand>
        <name>S-adenosyl-L-methionine</name>
        <dbReference type="ChEBI" id="CHEBI:59789"/>
    </ligand>
</feature>
<feature type="binding site" evidence="2">
    <location>
        <position position="253"/>
    </location>
    <ligand>
        <name>S-adenosyl-L-methionine</name>
        <dbReference type="ChEBI" id="CHEBI:59789"/>
    </ligand>
</feature>
<name>METL2_CHICK</name>
<reference key="1">
    <citation type="journal article" date="2005" name="Genome Biol.">
        <title>Full-length cDNAs from chicken bursal lymphocytes to facilitate gene function analysis.</title>
        <authorList>
            <person name="Caldwell R.B."/>
            <person name="Kierzek A.M."/>
            <person name="Arakawa H."/>
            <person name="Bezzubov Y."/>
            <person name="Zaim J."/>
            <person name="Fiedler P."/>
            <person name="Kutter S."/>
            <person name="Blagodatski A."/>
            <person name="Kostovska D."/>
            <person name="Koter M."/>
            <person name="Plachy J."/>
            <person name="Carninci P."/>
            <person name="Hayashizaki Y."/>
            <person name="Buerstedde J.-M."/>
        </authorList>
    </citation>
    <scope>NUCLEOTIDE SEQUENCE [LARGE SCALE MRNA]</scope>
    <source>
        <strain>CB</strain>
        <tissue>Bursa of Fabricius</tissue>
    </source>
</reference>
<evidence type="ECO:0000250" key="1">
    <source>
        <dbReference type="UniProtKB" id="Q8BMK1"/>
    </source>
</evidence>
<evidence type="ECO:0000250" key="2">
    <source>
        <dbReference type="UniProtKB" id="Q8TCB7"/>
    </source>
</evidence>
<evidence type="ECO:0000250" key="3">
    <source>
        <dbReference type="UniProtKB" id="Q96IZ6"/>
    </source>
</evidence>
<evidence type="ECO:0000303" key="4">
    <source>
    </source>
</evidence>
<evidence type="ECO:0000305" key="5"/>
<accession>Q5ZHP8</accession>
<comment type="function">
    <text evidence="3">S-adenosyl-L-methionine-dependent methyltransferase that mediates N(3)-methylcytidine modification of residue 32 of the tRNA anticodon loop of tRNA(Thr)(UGU) and tRNA(Arg)(CCU). N(3)-methylcytidine methylation by METTL2 requires the N6-threonylcarbamoylation of tRNA (t6A37) by the EKC/KEOPS complex as prerequisite.</text>
</comment>
<comment type="catalytic activity">
    <reaction evidence="1">
        <text>cytidine(32) in tRNA(Thr) + S-adenosyl-L-methionine = N(3)-methylcytidine(32) in tRNA(Thr) + S-adenosyl-L-homocysteine + H(+)</text>
        <dbReference type="Rhea" id="RHEA:50960"/>
        <dbReference type="Rhea" id="RHEA-COMP:12850"/>
        <dbReference type="Rhea" id="RHEA-COMP:12852"/>
        <dbReference type="ChEBI" id="CHEBI:15378"/>
        <dbReference type="ChEBI" id="CHEBI:57856"/>
        <dbReference type="ChEBI" id="CHEBI:59789"/>
        <dbReference type="ChEBI" id="CHEBI:74894"/>
        <dbReference type="ChEBI" id="CHEBI:82748"/>
    </reaction>
    <physiologicalReaction direction="left-to-right" evidence="1">
        <dbReference type="Rhea" id="RHEA:50961"/>
    </physiologicalReaction>
</comment>
<comment type="catalytic activity">
    <reaction evidence="1">
        <text>cytidine(32) in tRNA(Arg)(CCU) + S-adenosyl-L-methionine = N(3)-methylcytidine(32) in tRNA(Arg)(CCU) + S-adenosyl-L-homocysteine + H(+)</text>
        <dbReference type="Rhea" id="RHEA:60912"/>
        <dbReference type="Rhea" id="RHEA-COMP:15710"/>
        <dbReference type="Rhea" id="RHEA-COMP:15712"/>
        <dbReference type="ChEBI" id="CHEBI:15378"/>
        <dbReference type="ChEBI" id="CHEBI:57856"/>
        <dbReference type="ChEBI" id="CHEBI:59789"/>
        <dbReference type="ChEBI" id="CHEBI:74894"/>
        <dbReference type="ChEBI" id="CHEBI:82748"/>
    </reaction>
    <physiologicalReaction direction="left-to-right" evidence="1">
        <dbReference type="Rhea" id="RHEA:60913"/>
    </physiologicalReaction>
</comment>
<comment type="subunit">
    <text evidence="3">Monomer.</text>
</comment>
<comment type="subcellular location">
    <subcellularLocation>
        <location evidence="3">Cytoplasm</location>
    </subcellularLocation>
</comment>
<comment type="similarity">
    <text evidence="5">Belongs to the methyltransferase superfamily. METL family.</text>
</comment>
<keyword id="KW-0963">Cytoplasm</keyword>
<keyword id="KW-0489">Methyltransferase</keyword>
<keyword id="KW-1185">Reference proteome</keyword>
<keyword id="KW-0949">S-adenosyl-L-methionine</keyword>
<keyword id="KW-0808">Transferase</keyword>
<keyword id="KW-0819">tRNA processing</keyword>